<reference key="1">
    <citation type="submission" date="2008-05" db="EMBL/GenBank/DDBJ databases">
        <title>Complete genome sequence of Clostridium botulinum E3 str. Alaska E43.</title>
        <authorList>
            <person name="Brinkac L.M."/>
            <person name="Brown J.L."/>
            <person name="Bruce D."/>
            <person name="Detter C."/>
            <person name="Munk C."/>
            <person name="Smith L.A."/>
            <person name="Smith T.J."/>
            <person name="Sutton G."/>
            <person name="Brettin T.S."/>
        </authorList>
    </citation>
    <scope>NUCLEOTIDE SEQUENCE [LARGE SCALE GENOMIC DNA]</scope>
    <source>
        <strain>Alaska E43 / Type E3</strain>
    </source>
</reference>
<proteinExistence type="inferred from homology"/>
<comment type="function">
    <text evidence="1">One of the primary rRNA binding proteins, it binds directly near the 3'-end of the 23S rRNA, where it nucleates assembly of the 50S subunit.</text>
</comment>
<comment type="subunit">
    <text evidence="1">Part of the 50S ribosomal subunit. Forms a cluster with proteins L14 and L19.</text>
</comment>
<comment type="similarity">
    <text evidence="1">Belongs to the universal ribosomal protein uL3 family.</text>
</comment>
<gene>
    <name evidence="1" type="primary">rplC</name>
    <name type="ordered locus">CLH_0237</name>
</gene>
<evidence type="ECO:0000255" key="1">
    <source>
        <dbReference type="HAMAP-Rule" id="MF_01325"/>
    </source>
</evidence>
<evidence type="ECO:0000256" key="2">
    <source>
        <dbReference type="SAM" id="MobiDB-lite"/>
    </source>
</evidence>
<evidence type="ECO:0000305" key="3"/>
<name>RL3_CLOBA</name>
<feature type="chain" id="PRO_1000141844" description="Large ribosomal subunit protein uL3">
    <location>
        <begin position="1"/>
        <end position="209"/>
    </location>
</feature>
<feature type="region of interest" description="Disordered" evidence="2">
    <location>
        <begin position="130"/>
        <end position="162"/>
    </location>
</feature>
<dbReference type="EMBL" id="CP001078">
    <property type="protein sequence ID" value="ACD53430.1"/>
    <property type="molecule type" value="Genomic_DNA"/>
</dbReference>
<dbReference type="RefSeq" id="WP_003374163.1">
    <property type="nucleotide sequence ID" value="NC_010723.1"/>
</dbReference>
<dbReference type="SMR" id="B2UYB0"/>
<dbReference type="KEGG" id="cbt:CLH_0237"/>
<dbReference type="HOGENOM" id="CLU_044142_4_1_9"/>
<dbReference type="GO" id="GO:0022625">
    <property type="term" value="C:cytosolic large ribosomal subunit"/>
    <property type="evidence" value="ECO:0007669"/>
    <property type="project" value="TreeGrafter"/>
</dbReference>
<dbReference type="GO" id="GO:0019843">
    <property type="term" value="F:rRNA binding"/>
    <property type="evidence" value="ECO:0007669"/>
    <property type="project" value="UniProtKB-UniRule"/>
</dbReference>
<dbReference type="GO" id="GO:0003735">
    <property type="term" value="F:structural constituent of ribosome"/>
    <property type="evidence" value="ECO:0007669"/>
    <property type="project" value="InterPro"/>
</dbReference>
<dbReference type="GO" id="GO:0006412">
    <property type="term" value="P:translation"/>
    <property type="evidence" value="ECO:0007669"/>
    <property type="project" value="UniProtKB-UniRule"/>
</dbReference>
<dbReference type="FunFam" id="2.40.30.10:FF:000004">
    <property type="entry name" value="50S ribosomal protein L3"/>
    <property type="match status" value="1"/>
</dbReference>
<dbReference type="FunFam" id="3.30.160.810:FF:000001">
    <property type="entry name" value="50S ribosomal protein L3"/>
    <property type="match status" value="1"/>
</dbReference>
<dbReference type="Gene3D" id="3.30.160.810">
    <property type="match status" value="1"/>
</dbReference>
<dbReference type="Gene3D" id="2.40.30.10">
    <property type="entry name" value="Translation factors"/>
    <property type="match status" value="1"/>
</dbReference>
<dbReference type="HAMAP" id="MF_01325_B">
    <property type="entry name" value="Ribosomal_uL3_B"/>
    <property type="match status" value="1"/>
</dbReference>
<dbReference type="InterPro" id="IPR000597">
    <property type="entry name" value="Ribosomal_uL3"/>
</dbReference>
<dbReference type="InterPro" id="IPR019927">
    <property type="entry name" value="Ribosomal_uL3_bac/org-type"/>
</dbReference>
<dbReference type="InterPro" id="IPR019926">
    <property type="entry name" value="Ribosomal_uL3_CS"/>
</dbReference>
<dbReference type="InterPro" id="IPR009000">
    <property type="entry name" value="Transl_B-barrel_sf"/>
</dbReference>
<dbReference type="NCBIfam" id="TIGR03625">
    <property type="entry name" value="L3_bact"/>
    <property type="match status" value="1"/>
</dbReference>
<dbReference type="PANTHER" id="PTHR11229">
    <property type="entry name" value="50S RIBOSOMAL PROTEIN L3"/>
    <property type="match status" value="1"/>
</dbReference>
<dbReference type="PANTHER" id="PTHR11229:SF16">
    <property type="entry name" value="LARGE RIBOSOMAL SUBUNIT PROTEIN UL3C"/>
    <property type="match status" value="1"/>
</dbReference>
<dbReference type="Pfam" id="PF00297">
    <property type="entry name" value="Ribosomal_L3"/>
    <property type="match status" value="1"/>
</dbReference>
<dbReference type="SUPFAM" id="SSF50447">
    <property type="entry name" value="Translation proteins"/>
    <property type="match status" value="1"/>
</dbReference>
<dbReference type="PROSITE" id="PS00474">
    <property type="entry name" value="RIBOSOMAL_L3"/>
    <property type="match status" value="1"/>
</dbReference>
<keyword id="KW-0687">Ribonucleoprotein</keyword>
<keyword id="KW-0689">Ribosomal protein</keyword>
<keyword id="KW-0694">RNA-binding</keyword>
<keyword id="KW-0699">rRNA-binding</keyword>
<sequence length="209" mass="22733">MKKAIMGKKIGMTQIFNEAGKVIPVTVVEAGPCVVVQKKTVEKDGYEAIQVGFGDIREKLVNKPAKGHFEKAGVVLKRTLKEFRLEDVSQYEVGQEIKADVFEIGDKIDVSGVSKGKGFQGVIKRWNQQRGPMTHGSKFKRAPGSMGASSDPSRTFKNKRMPGHMGCVNTTVMNLEVVKVIAEKNLLLIKGGIPGPNKGTVVIRNAVKA</sequence>
<protein>
    <recommendedName>
        <fullName evidence="1">Large ribosomal subunit protein uL3</fullName>
    </recommendedName>
    <alternativeName>
        <fullName evidence="3">50S ribosomal protein L3</fullName>
    </alternativeName>
</protein>
<organism>
    <name type="scientific">Clostridium botulinum (strain Alaska E43 / Type E3)</name>
    <dbReference type="NCBI Taxonomy" id="508767"/>
    <lineage>
        <taxon>Bacteria</taxon>
        <taxon>Bacillati</taxon>
        <taxon>Bacillota</taxon>
        <taxon>Clostridia</taxon>
        <taxon>Eubacteriales</taxon>
        <taxon>Clostridiaceae</taxon>
        <taxon>Clostridium</taxon>
    </lineage>
</organism>
<accession>B2UYB0</accession>